<protein>
    <recommendedName>
        <fullName>Pheromone receptor 2</fullName>
    </recommendedName>
</protein>
<sequence length="346" mass="38781">MFSGKENVSFGVLCLLAGCISTSSCLIHLQAKNIGVLLMMFWCFTGLVNKGINALAFNNSLRLAWTLGCDLSAIIERTWQFGLCCSALCVLQRLEGIASLRQAHSTVWDRKRRLLIDFGVGLGLPALQIPMFFIVQPYRLNVIENIGCSAPLYASVPALFIYHLWRLLVSLVCAVYAVLVLRWFMLRRRQFTAALSSQHSGLSQKKYFRLFALAICERVLVSAGQFYVIIQSLQIGGLLPYTSWAEVHTNFNRILFVPVDTIAHSSLLSLSILRWFSLTPAMALFVFFGLTEEAQSVYKARWKALINLCSSKGKKQTDGRESLDLEAFESHGSKFSVLVQRDTVIC</sequence>
<organism>
    <name type="scientific">Mycosarcoma maydis</name>
    <name type="common">Corn smut fungus</name>
    <name type="synonym">Ustilago maydis</name>
    <dbReference type="NCBI Taxonomy" id="5270"/>
    <lineage>
        <taxon>Eukaryota</taxon>
        <taxon>Fungi</taxon>
        <taxon>Dikarya</taxon>
        <taxon>Basidiomycota</taxon>
        <taxon>Ustilaginomycotina</taxon>
        <taxon>Ustilaginomycetes</taxon>
        <taxon>Ustilaginales</taxon>
        <taxon>Ustilaginaceae</taxon>
        <taxon>Mycosarcoma</taxon>
    </lineage>
</organism>
<evidence type="ECO:0000255" key="1"/>
<evidence type="ECO:0000305" key="2"/>
<feature type="chain" id="PRO_0000195078" description="Pheromone receptor 2">
    <location>
        <begin position="1"/>
        <end position="346"/>
    </location>
</feature>
<feature type="transmembrane region" description="Helical; Name=1" evidence="1">
    <location>
        <begin position="8"/>
        <end position="28"/>
    </location>
</feature>
<feature type="transmembrane region" description="Helical; Name=2" evidence="1">
    <location>
        <begin position="34"/>
        <end position="54"/>
    </location>
</feature>
<feature type="transmembrane region" description="Helical; Name=3" evidence="1">
    <location>
        <begin position="71"/>
        <end position="94"/>
    </location>
</feature>
<feature type="transmembrane region" description="Helical; Name=4" evidence="1">
    <location>
        <begin position="115"/>
        <end position="135"/>
    </location>
</feature>
<feature type="transmembrane region" description="Helical; Name=5" evidence="1">
    <location>
        <begin position="160"/>
        <end position="180"/>
    </location>
</feature>
<feature type="transmembrane region" description="Helical; Name=6" evidence="1">
    <location>
        <begin position="219"/>
        <end position="239"/>
    </location>
</feature>
<feature type="transmembrane region" description="Helical; Name=7" evidence="1">
    <location>
        <begin position="270"/>
        <end position="290"/>
    </location>
</feature>
<gene>
    <name type="primary">PRA2</name>
</gene>
<dbReference type="EMBL" id="U37796">
    <property type="protein sequence ID" value="AAA99768.1"/>
    <property type="molecule type" value="Genomic_DNA"/>
</dbReference>
<dbReference type="PIR" id="D42087">
    <property type="entry name" value="D42087"/>
</dbReference>
<dbReference type="PIR" id="S64693">
    <property type="entry name" value="S64693"/>
</dbReference>
<dbReference type="VEuPathDB" id="FungiDB:UMAG_02383"/>
<dbReference type="GO" id="GO:0016020">
    <property type="term" value="C:membrane"/>
    <property type="evidence" value="ECO:0007669"/>
    <property type="project" value="UniProtKB-SubCell"/>
</dbReference>
<dbReference type="GO" id="GO:0004933">
    <property type="term" value="F:mating-type a-factor pheromone receptor activity"/>
    <property type="evidence" value="ECO:0007669"/>
    <property type="project" value="InterPro"/>
</dbReference>
<dbReference type="GO" id="GO:0019236">
    <property type="term" value="P:response to pheromone"/>
    <property type="evidence" value="ECO:0007669"/>
    <property type="project" value="UniProtKB-KW"/>
</dbReference>
<dbReference type="CDD" id="cd14966">
    <property type="entry name" value="7tmD_STE3"/>
    <property type="match status" value="1"/>
</dbReference>
<dbReference type="InterPro" id="IPR001546">
    <property type="entry name" value="GPCR_Pheromne_A_rcpt"/>
</dbReference>
<dbReference type="InterPro" id="IPR001499">
    <property type="entry name" value="GPCR_STE3"/>
</dbReference>
<dbReference type="PANTHER" id="PTHR28097">
    <property type="entry name" value="PHEROMONE A FACTOR RECEPTOR"/>
    <property type="match status" value="1"/>
</dbReference>
<dbReference type="PANTHER" id="PTHR28097:SF1">
    <property type="entry name" value="PHEROMONE A FACTOR RECEPTOR"/>
    <property type="match status" value="1"/>
</dbReference>
<dbReference type="Pfam" id="PF02076">
    <property type="entry name" value="STE3"/>
    <property type="match status" value="1"/>
</dbReference>
<dbReference type="PRINTS" id="PR00899">
    <property type="entry name" value="GPCRSTE3"/>
</dbReference>
<dbReference type="PRINTS" id="PR00900">
    <property type="entry name" value="PHEROMONEAR"/>
</dbReference>
<name>PRA2_MYCMD</name>
<accession>P31303</accession>
<reference key="1">
    <citation type="journal article" date="1992" name="Cell">
        <title>The a mating type locus of U. maydis specifies cell signaling components.</title>
        <authorList>
            <person name="Boelker M."/>
            <person name="Urban M."/>
            <person name="Kahmann R."/>
        </authorList>
    </citation>
    <scope>NUCLEOTIDE SEQUENCE [GENOMIC DNA]</scope>
    <source>
        <strain>FBD11-21</strain>
    </source>
</reference>
<reference key="2">
    <citation type="journal article" date="1996" name="Mol. Gen. Genet.">
        <title>The biallelic a mating type locus of Ustilago maydis: remnants of an additional pheromone gene indicate evolution from a multiallelic ancestor.</title>
        <authorList>
            <person name="Urban M."/>
            <person name="Kahmann R."/>
            <person name="Boelker M."/>
        </authorList>
    </citation>
    <scope>NUCLEOTIDE SEQUENCE [GENOMIC DNA]</scope>
    <source>
        <strain>FBD11-21</strain>
    </source>
</reference>
<comment type="function">
    <text>Receptor for the A1 pheromone, a prenylated mating factor.</text>
</comment>
<comment type="subcellular location">
    <subcellularLocation>
        <location>Membrane</location>
        <topology>Multi-pass membrane protein</topology>
    </subcellularLocation>
</comment>
<comment type="similarity">
    <text evidence="2">Belongs to the G-protein coupled receptor 4 family.</text>
</comment>
<proteinExistence type="inferred from homology"/>
<keyword id="KW-0297">G-protein coupled receptor</keyword>
<keyword id="KW-0472">Membrane</keyword>
<keyword id="KW-0589">Pheromone response</keyword>
<keyword id="KW-0675">Receptor</keyword>
<keyword id="KW-0807">Transducer</keyword>
<keyword id="KW-0812">Transmembrane</keyword>
<keyword id="KW-1133">Transmembrane helix</keyword>